<keyword id="KW-0067">ATP-binding</keyword>
<keyword id="KW-0963">Cytoplasm</keyword>
<keyword id="KW-1015">Disulfide bond</keyword>
<keyword id="KW-0547">Nucleotide-binding</keyword>
<keyword id="KW-0694">RNA-binding</keyword>
<keyword id="KW-0808">Transferase</keyword>
<keyword id="KW-0819">tRNA processing</keyword>
<keyword id="KW-0820">tRNA-binding</keyword>
<protein>
    <recommendedName>
        <fullName evidence="1">tRNA-specific 2-thiouridylase MnmA</fullName>
        <ecNumber evidence="1">2.8.1.13</ecNumber>
    </recommendedName>
</protein>
<name>MNMA_BURA4</name>
<sequence>MTKRRVVVGMSGGVDSSVTAWLLKEQGYDVVGLFMKNWEDDDDGEYCSTRQDWIDVVSVADLIGIDVEAVNFAAEYKDRVFAEFLREYSAGRTPNPDVLCNAEIKFKAFLDHAMSLDAEMIATGHYARVRERDGRFELLKAFDHTKDQSYFLHRLNQAQLSKTMFPLGEIPKTKVREIAAQIGLPNAKKKDSTGICFIGERPFRDFLNRYLPTKPGPMKTPDGKVIGEHIGLAFYTFGQRKGIGLGGSKDGSGEPWFVAAKDIASNTLYVVQGHDHPWLLSRQLVAGNVSWVAGEPPADGFSCGAKTRYRQADAACSFGRPALGRADGERFSLTFDDAQWAVTPGQSAVLYDGEICLGGGIIEFAATGQPGQTAPAAAAGHAGALAEAR</sequence>
<feature type="chain" id="PRO_0000349549" description="tRNA-specific 2-thiouridylase MnmA">
    <location>
        <begin position="1"/>
        <end position="389"/>
    </location>
</feature>
<feature type="region of interest" description="Interaction with target base in tRNA" evidence="1">
    <location>
        <begin position="95"/>
        <end position="97"/>
    </location>
</feature>
<feature type="region of interest" description="Interaction with tRNA" evidence="1">
    <location>
        <begin position="146"/>
        <end position="148"/>
    </location>
</feature>
<feature type="region of interest" description="Interaction with tRNA" evidence="1">
    <location>
        <begin position="308"/>
        <end position="309"/>
    </location>
</feature>
<feature type="active site" description="Nucleophile" evidence="1">
    <location>
        <position position="100"/>
    </location>
</feature>
<feature type="active site" description="Cysteine persulfide intermediate" evidence="1">
    <location>
        <position position="196"/>
    </location>
</feature>
<feature type="binding site" evidence="1">
    <location>
        <begin position="9"/>
        <end position="16"/>
    </location>
    <ligand>
        <name>ATP</name>
        <dbReference type="ChEBI" id="CHEBI:30616"/>
    </ligand>
</feature>
<feature type="binding site" evidence="1">
    <location>
        <position position="35"/>
    </location>
    <ligand>
        <name>ATP</name>
        <dbReference type="ChEBI" id="CHEBI:30616"/>
    </ligand>
</feature>
<feature type="binding site" evidence="1">
    <location>
        <position position="124"/>
    </location>
    <ligand>
        <name>ATP</name>
        <dbReference type="ChEBI" id="CHEBI:30616"/>
    </ligand>
</feature>
<feature type="site" description="Interaction with tRNA" evidence="1">
    <location>
        <position position="125"/>
    </location>
</feature>
<feature type="site" description="Interaction with tRNA" evidence="1">
    <location>
        <position position="346"/>
    </location>
</feature>
<feature type="disulfide bond" description="Alternate" evidence="1">
    <location>
        <begin position="100"/>
        <end position="196"/>
    </location>
</feature>
<accession>B1YTE9</accession>
<gene>
    <name evidence="1" type="primary">mnmA</name>
    <name type="ordered locus">BamMC406_0617</name>
</gene>
<organism>
    <name type="scientific">Burkholderia ambifaria (strain MC40-6)</name>
    <dbReference type="NCBI Taxonomy" id="398577"/>
    <lineage>
        <taxon>Bacteria</taxon>
        <taxon>Pseudomonadati</taxon>
        <taxon>Pseudomonadota</taxon>
        <taxon>Betaproteobacteria</taxon>
        <taxon>Burkholderiales</taxon>
        <taxon>Burkholderiaceae</taxon>
        <taxon>Burkholderia</taxon>
        <taxon>Burkholderia cepacia complex</taxon>
    </lineage>
</organism>
<comment type="function">
    <text evidence="1">Catalyzes the 2-thiolation of uridine at the wobble position (U34) of tRNA, leading to the formation of s(2)U34.</text>
</comment>
<comment type="catalytic activity">
    <reaction evidence="1">
        <text>S-sulfanyl-L-cysteinyl-[protein] + uridine(34) in tRNA + AH2 + ATP = 2-thiouridine(34) in tRNA + L-cysteinyl-[protein] + A + AMP + diphosphate + H(+)</text>
        <dbReference type="Rhea" id="RHEA:47032"/>
        <dbReference type="Rhea" id="RHEA-COMP:10131"/>
        <dbReference type="Rhea" id="RHEA-COMP:11726"/>
        <dbReference type="Rhea" id="RHEA-COMP:11727"/>
        <dbReference type="Rhea" id="RHEA-COMP:11728"/>
        <dbReference type="ChEBI" id="CHEBI:13193"/>
        <dbReference type="ChEBI" id="CHEBI:15378"/>
        <dbReference type="ChEBI" id="CHEBI:17499"/>
        <dbReference type="ChEBI" id="CHEBI:29950"/>
        <dbReference type="ChEBI" id="CHEBI:30616"/>
        <dbReference type="ChEBI" id="CHEBI:33019"/>
        <dbReference type="ChEBI" id="CHEBI:61963"/>
        <dbReference type="ChEBI" id="CHEBI:65315"/>
        <dbReference type="ChEBI" id="CHEBI:87170"/>
        <dbReference type="ChEBI" id="CHEBI:456215"/>
        <dbReference type="EC" id="2.8.1.13"/>
    </reaction>
</comment>
<comment type="subcellular location">
    <subcellularLocation>
        <location evidence="1">Cytoplasm</location>
    </subcellularLocation>
</comment>
<comment type="similarity">
    <text evidence="1">Belongs to the MnmA/TRMU family.</text>
</comment>
<dbReference type="EC" id="2.8.1.13" evidence="1"/>
<dbReference type="EMBL" id="CP001025">
    <property type="protein sequence ID" value="ACB63114.1"/>
    <property type="molecule type" value="Genomic_DNA"/>
</dbReference>
<dbReference type="RefSeq" id="WP_012363112.1">
    <property type="nucleotide sequence ID" value="NC_010551.1"/>
</dbReference>
<dbReference type="SMR" id="B1YTE9"/>
<dbReference type="KEGG" id="bac:BamMC406_0617"/>
<dbReference type="HOGENOM" id="CLU_035188_1_0_4"/>
<dbReference type="OrthoDB" id="9800696at2"/>
<dbReference type="Proteomes" id="UP000001680">
    <property type="component" value="Chromosome 1"/>
</dbReference>
<dbReference type="GO" id="GO:0005737">
    <property type="term" value="C:cytoplasm"/>
    <property type="evidence" value="ECO:0007669"/>
    <property type="project" value="UniProtKB-SubCell"/>
</dbReference>
<dbReference type="GO" id="GO:0005524">
    <property type="term" value="F:ATP binding"/>
    <property type="evidence" value="ECO:0007669"/>
    <property type="project" value="UniProtKB-KW"/>
</dbReference>
<dbReference type="GO" id="GO:0000049">
    <property type="term" value="F:tRNA binding"/>
    <property type="evidence" value="ECO:0007669"/>
    <property type="project" value="UniProtKB-KW"/>
</dbReference>
<dbReference type="GO" id="GO:0103016">
    <property type="term" value="F:tRNA-uridine 2-sulfurtransferase activity"/>
    <property type="evidence" value="ECO:0007669"/>
    <property type="project" value="UniProtKB-EC"/>
</dbReference>
<dbReference type="GO" id="GO:0002143">
    <property type="term" value="P:tRNA wobble position uridine thiolation"/>
    <property type="evidence" value="ECO:0007669"/>
    <property type="project" value="TreeGrafter"/>
</dbReference>
<dbReference type="CDD" id="cd01998">
    <property type="entry name" value="MnmA_TRMU-like"/>
    <property type="match status" value="1"/>
</dbReference>
<dbReference type="FunFam" id="2.30.30.280:FF:000001">
    <property type="entry name" value="tRNA-specific 2-thiouridylase MnmA"/>
    <property type="match status" value="1"/>
</dbReference>
<dbReference type="FunFam" id="2.40.30.10:FF:000023">
    <property type="entry name" value="tRNA-specific 2-thiouridylase MnmA"/>
    <property type="match status" value="1"/>
</dbReference>
<dbReference type="FunFam" id="3.40.50.620:FF:000004">
    <property type="entry name" value="tRNA-specific 2-thiouridylase MnmA"/>
    <property type="match status" value="1"/>
</dbReference>
<dbReference type="Gene3D" id="2.30.30.280">
    <property type="entry name" value="Adenine nucleotide alpha hydrolases-like domains"/>
    <property type="match status" value="1"/>
</dbReference>
<dbReference type="Gene3D" id="3.40.50.620">
    <property type="entry name" value="HUPs"/>
    <property type="match status" value="1"/>
</dbReference>
<dbReference type="Gene3D" id="2.40.30.10">
    <property type="entry name" value="Translation factors"/>
    <property type="match status" value="1"/>
</dbReference>
<dbReference type="HAMAP" id="MF_00144">
    <property type="entry name" value="tRNA_thiouridyl_MnmA"/>
    <property type="match status" value="1"/>
</dbReference>
<dbReference type="InterPro" id="IPR004506">
    <property type="entry name" value="MnmA-like"/>
</dbReference>
<dbReference type="InterPro" id="IPR046885">
    <property type="entry name" value="MnmA-like_C"/>
</dbReference>
<dbReference type="InterPro" id="IPR046884">
    <property type="entry name" value="MnmA-like_central"/>
</dbReference>
<dbReference type="InterPro" id="IPR023382">
    <property type="entry name" value="MnmA-like_central_sf"/>
</dbReference>
<dbReference type="InterPro" id="IPR014729">
    <property type="entry name" value="Rossmann-like_a/b/a_fold"/>
</dbReference>
<dbReference type="NCBIfam" id="NF001138">
    <property type="entry name" value="PRK00143.1"/>
    <property type="match status" value="1"/>
</dbReference>
<dbReference type="NCBIfam" id="TIGR00420">
    <property type="entry name" value="trmU"/>
    <property type="match status" value="1"/>
</dbReference>
<dbReference type="PANTHER" id="PTHR11933:SF5">
    <property type="entry name" value="MITOCHONDRIAL TRNA-SPECIFIC 2-THIOURIDYLASE 1"/>
    <property type="match status" value="1"/>
</dbReference>
<dbReference type="PANTHER" id="PTHR11933">
    <property type="entry name" value="TRNA 5-METHYLAMINOMETHYL-2-THIOURIDYLATE -METHYLTRANSFERASE"/>
    <property type="match status" value="1"/>
</dbReference>
<dbReference type="Pfam" id="PF03054">
    <property type="entry name" value="tRNA_Me_trans"/>
    <property type="match status" value="1"/>
</dbReference>
<dbReference type="Pfam" id="PF20258">
    <property type="entry name" value="tRNA_Me_trans_C"/>
    <property type="match status" value="1"/>
</dbReference>
<dbReference type="Pfam" id="PF20259">
    <property type="entry name" value="tRNA_Me_trans_M"/>
    <property type="match status" value="1"/>
</dbReference>
<dbReference type="SUPFAM" id="SSF52402">
    <property type="entry name" value="Adenine nucleotide alpha hydrolases-like"/>
    <property type="match status" value="1"/>
</dbReference>
<evidence type="ECO:0000255" key="1">
    <source>
        <dbReference type="HAMAP-Rule" id="MF_00144"/>
    </source>
</evidence>
<proteinExistence type="inferred from homology"/>
<reference key="1">
    <citation type="submission" date="2008-04" db="EMBL/GenBank/DDBJ databases">
        <title>Complete sequence of chromosome 1 of Burkholderia ambifaria MC40-6.</title>
        <authorList>
            <person name="Copeland A."/>
            <person name="Lucas S."/>
            <person name="Lapidus A."/>
            <person name="Glavina del Rio T."/>
            <person name="Dalin E."/>
            <person name="Tice H."/>
            <person name="Pitluck S."/>
            <person name="Chain P."/>
            <person name="Malfatti S."/>
            <person name="Shin M."/>
            <person name="Vergez L."/>
            <person name="Lang D."/>
            <person name="Schmutz J."/>
            <person name="Larimer F."/>
            <person name="Land M."/>
            <person name="Hauser L."/>
            <person name="Kyrpides N."/>
            <person name="Lykidis A."/>
            <person name="Ramette A."/>
            <person name="Konstantinidis K."/>
            <person name="Tiedje J."/>
            <person name="Richardson P."/>
        </authorList>
    </citation>
    <scope>NUCLEOTIDE SEQUENCE [LARGE SCALE GENOMIC DNA]</scope>
    <source>
        <strain>MC40-6</strain>
    </source>
</reference>